<feature type="chain" id="PRO_0000319333" description="Probable glucomannan 4-beta-mannosyltransferase 14">
    <location>
        <begin position="1"/>
        <end position="535"/>
    </location>
</feature>
<feature type="transmembrane region" description="Helical" evidence="2">
    <location>
        <begin position="42"/>
        <end position="62"/>
    </location>
</feature>
<feature type="transmembrane region" description="Helical" evidence="2">
    <location>
        <begin position="366"/>
        <end position="386"/>
    </location>
</feature>
<feature type="transmembrane region" description="Helical" evidence="2">
    <location>
        <begin position="403"/>
        <end position="423"/>
    </location>
</feature>
<feature type="transmembrane region" description="Helical" evidence="2">
    <location>
        <begin position="482"/>
        <end position="502"/>
    </location>
</feature>
<feature type="transmembrane region" description="Helical" evidence="2">
    <location>
        <begin position="503"/>
        <end position="523"/>
    </location>
</feature>
<feature type="active site" evidence="2">
    <location>
        <position position="131"/>
    </location>
</feature>
<feature type="active site" evidence="2">
    <location>
        <position position="287"/>
    </location>
</feature>
<feature type="binding site" evidence="2">
    <location>
        <position position="193"/>
    </location>
    <ligand>
        <name>substrate</name>
    </ligand>
</feature>
<feature type="binding site" evidence="2">
    <location>
        <position position="195"/>
    </location>
    <ligand>
        <name>substrate</name>
    </ligand>
</feature>
<feature type="sequence conflict" description="In Ref. 3; AAO42815 and 4; BAE99342." evidence="4" ref="3 4">
    <original>S</original>
    <variation>P</variation>
    <location>
        <position position="110"/>
    </location>
</feature>
<keyword id="KW-0961">Cell wall biogenesis/degradation</keyword>
<keyword id="KW-0328">Glycosyltransferase</keyword>
<keyword id="KW-0333">Golgi apparatus</keyword>
<keyword id="KW-0472">Membrane</keyword>
<keyword id="KW-1185">Reference proteome</keyword>
<keyword id="KW-0808">Transferase</keyword>
<keyword id="KW-0812">Transmembrane</keyword>
<keyword id="KW-1133">Transmembrane helix</keyword>
<evidence type="ECO:0000250" key="1">
    <source>
        <dbReference type="UniProtKB" id="Q9LZR3"/>
    </source>
</evidence>
<evidence type="ECO:0000255" key="2"/>
<evidence type="ECO:0000303" key="3">
    <source>
    </source>
</evidence>
<evidence type="ECO:0000305" key="4"/>
<sequence length="535" mass="61483">MATLSDGLFDDMSVLGVIGYVLEQTRFIFLVPILKRLVNLCQVVSVLLFVDAAYMAIVVAIVKLLGRTPQKVLKWESFKSDDIELAPSSNHPMVLIQIPIFNEKEVCQLSIGAACKLSWPLDRMIIQVLDDSTEEESQKLVRLECKKWESEGITIKSEVRGGFREGFKAGALTAGMKHSYVDEYKCEFVVIFDADFQPEPDFLERTVPFLVHNPEIALVQAGWKYGNADECCMTRIQEMSLNYHFAVEQKSGSSILGFFGFNGTAGVWRIKALNEAEGWKDRTIVEDMDLAVRAYLRGSKFVYVDDVKVKNELPSSFQAYRFQQHRWSCGPANLFKKIAMEIIKNQNVSLWKKVYLIYNFFFLRKIVVHIFTFVFYCVILPATVIFPEIEVPKWTTIYIPATITILNAIATPKSFYLILYWILFENVMAMHRSIGTLIGLLETSRVKEWIVTQKLGESNNLRENLIFPDHYSFPERLRWREIMVGMYLFICGYYDFVFGRTYLYVYLFLQSIAFFVVGVGYVGMPVPSTPVQTSE</sequence>
<gene>
    <name evidence="3" type="primary">CSLA14</name>
    <name type="ordered locus">At3g56000</name>
    <name type="ORF">F27K19.180</name>
</gene>
<comment type="function">
    <text evidence="1">Probable mannan synthase which consists of a 4-beta-mannosyltransferase activity on mannan using GDP-mannose. The beta-1,4-mannan product is the backbone for galactomannan synthesis by galactomannan galactosyltransferase. Galactomannan is a noncellulosic polysaccharides of plant cell wall.</text>
</comment>
<comment type="catalytic activity">
    <reaction evidence="1">
        <text>GDP-mannose + (glucomannan)n = GDP + (glucomannan)n+1.</text>
        <dbReference type="EC" id="2.4.1.32"/>
    </reaction>
</comment>
<comment type="subcellular location">
    <subcellularLocation>
        <location evidence="4">Golgi apparatus membrane</location>
        <topology evidence="4">Multi-pass membrane protein</topology>
    </subcellularLocation>
</comment>
<comment type="similarity">
    <text evidence="4">Belongs to the glycosyltransferase 2 family. Plant cellulose synthase-like A subfamily.</text>
</comment>
<comment type="sequence caution" evidence="4">
    <conflict type="erroneous gene model prediction">
        <sequence resource="EMBL-CDS" id="CAB87854"/>
    </conflict>
</comment>
<dbReference type="EC" id="2.4.1.32" evidence="1"/>
<dbReference type="EMBL" id="AL163832">
    <property type="protein sequence ID" value="CAB87854.1"/>
    <property type="status" value="ALT_SEQ"/>
    <property type="molecule type" value="Genomic_DNA"/>
</dbReference>
<dbReference type="EMBL" id="CP002686">
    <property type="protein sequence ID" value="AEE79465.1"/>
    <property type="molecule type" value="Genomic_DNA"/>
</dbReference>
<dbReference type="EMBL" id="BT004569">
    <property type="protein sequence ID" value="AAO42815.1"/>
    <property type="molecule type" value="mRNA"/>
</dbReference>
<dbReference type="EMBL" id="AK227328">
    <property type="protein sequence ID" value="BAE99342.1"/>
    <property type="molecule type" value="mRNA"/>
</dbReference>
<dbReference type="PIR" id="T49212">
    <property type="entry name" value="T49212"/>
</dbReference>
<dbReference type="RefSeq" id="NP_191159.2">
    <property type="nucleotide sequence ID" value="NM_115458.5"/>
</dbReference>
<dbReference type="SMR" id="Q84W06"/>
<dbReference type="FunCoup" id="Q84W06">
    <property type="interactions" value="13"/>
</dbReference>
<dbReference type="STRING" id="3702.Q84W06"/>
<dbReference type="CAZy" id="GT2">
    <property type="family name" value="Glycosyltransferase Family 2"/>
</dbReference>
<dbReference type="PaxDb" id="3702-AT3G56000.1"/>
<dbReference type="ProteomicsDB" id="220500"/>
<dbReference type="EnsemblPlants" id="AT3G56000.1">
    <property type="protein sequence ID" value="AT3G56000.1"/>
    <property type="gene ID" value="AT3G56000"/>
</dbReference>
<dbReference type="GeneID" id="824766"/>
<dbReference type="Gramene" id="AT3G56000.1">
    <property type="protein sequence ID" value="AT3G56000.1"/>
    <property type="gene ID" value="AT3G56000"/>
</dbReference>
<dbReference type="KEGG" id="ath:AT3G56000"/>
<dbReference type="Araport" id="AT3G56000"/>
<dbReference type="TAIR" id="AT3G56000">
    <property type="gene designation" value="CSLA14"/>
</dbReference>
<dbReference type="eggNOG" id="ENOG502QR7J">
    <property type="taxonomic scope" value="Eukaryota"/>
</dbReference>
<dbReference type="HOGENOM" id="CLU_012856_2_0_1"/>
<dbReference type="InParanoid" id="Q84W06"/>
<dbReference type="OMA" id="MAMEIIQ"/>
<dbReference type="BioCyc" id="ARA:AT3G56000-MONOMER"/>
<dbReference type="PRO" id="PR:Q84W06"/>
<dbReference type="Proteomes" id="UP000006548">
    <property type="component" value="Chromosome 3"/>
</dbReference>
<dbReference type="ExpressionAtlas" id="Q84W06">
    <property type="expression patterns" value="baseline and differential"/>
</dbReference>
<dbReference type="GO" id="GO:0000139">
    <property type="term" value="C:Golgi membrane"/>
    <property type="evidence" value="ECO:0007669"/>
    <property type="project" value="UniProtKB-SubCell"/>
</dbReference>
<dbReference type="GO" id="GO:0047259">
    <property type="term" value="F:glucomannan 4-beta-mannosyltransferase activity"/>
    <property type="evidence" value="ECO:0007669"/>
    <property type="project" value="UniProtKB-EC"/>
</dbReference>
<dbReference type="GO" id="GO:0071555">
    <property type="term" value="P:cell wall organization"/>
    <property type="evidence" value="ECO:0007669"/>
    <property type="project" value="UniProtKB-KW"/>
</dbReference>
<dbReference type="FunFam" id="3.90.550.10:FF:000057">
    <property type="entry name" value="Glycosyltransferase-like protein, family 2"/>
    <property type="match status" value="1"/>
</dbReference>
<dbReference type="Gene3D" id="3.90.550.10">
    <property type="entry name" value="Spore Coat Polysaccharide Biosynthesis Protein SpsA, Chain A"/>
    <property type="match status" value="1"/>
</dbReference>
<dbReference type="InterPro" id="IPR001173">
    <property type="entry name" value="Glyco_trans_2-like"/>
</dbReference>
<dbReference type="InterPro" id="IPR029044">
    <property type="entry name" value="Nucleotide-diphossugar_trans"/>
</dbReference>
<dbReference type="PANTHER" id="PTHR32044:SF63">
    <property type="entry name" value="GLUCOMANNAN 4-BETA-MANNOSYLTRANSFERASE 14-RELATED"/>
    <property type="match status" value="1"/>
</dbReference>
<dbReference type="PANTHER" id="PTHR32044">
    <property type="entry name" value="GLUCOMANNAN 4-BETA-MANNOSYLTRANSFERASE 9"/>
    <property type="match status" value="1"/>
</dbReference>
<dbReference type="Pfam" id="PF13632">
    <property type="entry name" value="Glyco_trans_2_3"/>
    <property type="match status" value="1"/>
</dbReference>
<dbReference type="SUPFAM" id="SSF53448">
    <property type="entry name" value="Nucleotide-diphospho-sugar transferases"/>
    <property type="match status" value="1"/>
</dbReference>
<proteinExistence type="evidence at transcript level"/>
<organism>
    <name type="scientific">Arabidopsis thaliana</name>
    <name type="common">Mouse-ear cress</name>
    <dbReference type="NCBI Taxonomy" id="3702"/>
    <lineage>
        <taxon>Eukaryota</taxon>
        <taxon>Viridiplantae</taxon>
        <taxon>Streptophyta</taxon>
        <taxon>Embryophyta</taxon>
        <taxon>Tracheophyta</taxon>
        <taxon>Spermatophyta</taxon>
        <taxon>Magnoliopsida</taxon>
        <taxon>eudicotyledons</taxon>
        <taxon>Gunneridae</taxon>
        <taxon>Pentapetalae</taxon>
        <taxon>rosids</taxon>
        <taxon>malvids</taxon>
        <taxon>Brassicales</taxon>
        <taxon>Brassicaceae</taxon>
        <taxon>Camelineae</taxon>
        <taxon>Arabidopsis</taxon>
    </lineage>
</organism>
<name>CSLAE_ARATH</name>
<reference key="1">
    <citation type="journal article" date="2000" name="Nature">
        <title>Sequence and analysis of chromosome 3 of the plant Arabidopsis thaliana.</title>
        <authorList>
            <person name="Salanoubat M."/>
            <person name="Lemcke K."/>
            <person name="Rieger M."/>
            <person name="Ansorge W."/>
            <person name="Unseld M."/>
            <person name="Fartmann B."/>
            <person name="Valle G."/>
            <person name="Bloecker H."/>
            <person name="Perez-Alonso M."/>
            <person name="Obermaier B."/>
            <person name="Delseny M."/>
            <person name="Boutry M."/>
            <person name="Grivell L.A."/>
            <person name="Mache R."/>
            <person name="Puigdomenech P."/>
            <person name="De Simone V."/>
            <person name="Choisne N."/>
            <person name="Artiguenave F."/>
            <person name="Robert C."/>
            <person name="Brottier P."/>
            <person name="Wincker P."/>
            <person name="Cattolico L."/>
            <person name="Weissenbach J."/>
            <person name="Saurin W."/>
            <person name="Quetier F."/>
            <person name="Schaefer M."/>
            <person name="Mueller-Auer S."/>
            <person name="Gabel C."/>
            <person name="Fuchs M."/>
            <person name="Benes V."/>
            <person name="Wurmbach E."/>
            <person name="Drzonek H."/>
            <person name="Erfle H."/>
            <person name="Jordan N."/>
            <person name="Bangert S."/>
            <person name="Wiedelmann R."/>
            <person name="Kranz H."/>
            <person name="Voss H."/>
            <person name="Holland R."/>
            <person name="Brandt P."/>
            <person name="Nyakatura G."/>
            <person name="Vezzi A."/>
            <person name="D'Angelo M."/>
            <person name="Pallavicini A."/>
            <person name="Toppo S."/>
            <person name="Simionati B."/>
            <person name="Conrad A."/>
            <person name="Hornischer K."/>
            <person name="Kauer G."/>
            <person name="Loehnert T.-H."/>
            <person name="Nordsiek G."/>
            <person name="Reichelt J."/>
            <person name="Scharfe M."/>
            <person name="Schoen O."/>
            <person name="Bargues M."/>
            <person name="Terol J."/>
            <person name="Climent J."/>
            <person name="Navarro P."/>
            <person name="Collado C."/>
            <person name="Perez-Perez A."/>
            <person name="Ottenwaelder B."/>
            <person name="Duchemin D."/>
            <person name="Cooke R."/>
            <person name="Laudie M."/>
            <person name="Berger-Llauro C."/>
            <person name="Purnelle B."/>
            <person name="Masuy D."/>
            <person name="de Haan M."/>
            <person name="Maarse A.C."/>
            <person name="Alcaraz J.-P."/>
            <person name="Cottet A."/>
            <person name="Casacuberta E."/>
            <person name="Monfort A."/>
            <person name="Argiriou A."/>
            <person name="Flores M."/>
            <person name="Liguori R."/>
            <person name="Vitale D."/>
            <person name="Mannhaupt G."/>
            <person name="Haase D."/>
            <person name="Schoof H."/>
            <person name="Rudd S."/>
            <person name="Zaccaria P."/>
            <person name="Mewes H.-W."/>
            <person name="Mayer K.F.X."/>
            <person name="Kaul S."/>
            <person name="Town C.D."/>
            <person name="Koo H.L."/>
            <person name="Tallon L.J."/>
            <person name="Jenkins J."/>
            <person name="Rooney T."/>
            <person name="Rizzo M."/>
            <person name="Walts A."/>
            <person name="Utterback T."/>
            <person name="Fujii C.Y."/>
            <person name="Shea T.P."/>
            <person name="Creasy T.H."/>
            <person name="Haas B."/>
            <person name="Maiti R."/>
            <person name="Wu D."/>
            <person name="Peterson J."/>
            <person name="Van Aken S."/>
            <person name="Pai G."/>
            <person name="Militscher J."/>
            <person name="Sellers P."/>
            <person name="Gill J.E."/>
            <person name="Feldblyum T.V."/>
            <person name="Preuss D."/>
            <person name="Lin X."/>
            <person name="Nierman W.C."/>
            <person name="Salzberg S.L."/>
            <person name="White O."/>
            <person name="Venter J.C."/>
            <person name="Fraser C.M."/>
            <person name="Kaneko T."/>
            <person name="Nakamura Y."/>
            <person name="Sato S."/>
            <person name="Kato T."/>
            <person name="Asamizu E."/>
            <person name="Sasamoto S."/>
            <person name="Kimura T."/>
            <person name="Idesawa K."/>
            <person name="Kawashima K."/>
            <person name="Kishida Y."/>
            <person name="Kiyokawa C."/>
            <person name="Kohara M."/>
            <person name="Matsumoto M."/>
            <person name="Matsuno A."/>
            <person name="Muraki A."/>
            <person name="Nakayama S."/>
            <person name="Nakazaki N."/>
            <person name="Shinpo S."/>
            <person name="Takeuchi C."/>
            <person name="Wada T."/>
            <person name="Watanabe A."/>
            <person name="Yamada M."/>
            <person name="Yasuda M."/>
            <person name="Tabata S."/>
        </authorList>
    </citation>
    <scope>NUCLEOTIDE SEQUENCE [LARGE SCALE GENOMIC DNA]</scope>
    <source>
        <strain>cv. Columbia</strain>
    </source>
</reference>
<reference key="2">
    <citation type="journal article" date="2017" name="Plant J.">
        <title>Araport11: a complete reannotation of the Arabidopsis thaliana reference genome.</title>
        <authorList>
            <person name="Cheng C.Y."/>
            <person name="Krishnakumar V."/>
            <person name="Chan A.P."/>
            <person name="Thibaud-Nissen F."/>
            <person name="Schobel S."/>
            <person name="Town C.D."/>
        </authorList>
    </citation>
    <scope>GENOME REANNOTATION</scope>
    <source>
        <strain>cv. Columbia</strain>
    </source>
</reference>
<reference key="3">
    <citation type="journal article" date="2003" name="Science">
        <title>Empirical analysis of transcriptional activity in the Arabidopsis genome.</title>
        <authorList>
            <person name="Yamada K."/>
            <person name="Lim J."/>
            <person name="Dale J.M."/>
            <person name="Chen H."/>
            <person name="Shinn P."/>
            <person name="Palm C.J."/>
            <person name="Southwick A.M."/>
            <person name="Wu H.C."/>
            <person name="Kim C.J."/>
            <person name="Nguyen M."/>
            <person name="Pham P.K."/>
            <person name="Cheuk R.F."/>
            <person name="Karlin-Newmann G."/>
            <person name="Liu S.X."/>
            <person name="Lam B."/>
            <person name="Sakano H."/>
            <person name="Wu T."/>
            <person name="Yu G."/>
            <person name="Miranda M."/>
            <person name="Quach H.L."/>
            <person name="Tripp M."/>
            <person name="Chang C.H."/>
            <person name="Lee J.M."/>
            <person name="Toriumi M.J."/>
            <person name="Chan M.M."/>
            <person name="Tang C.C."/>
            <person name="Onodera C.S."/>
            <person name="Deng J.M."/>
            <person name="Akiyama K."/>
            <person name="Ansari Y."/>
            <person name="Arakawa T."/>
            <person name="Banh J."/>
            <person name="Banno F."/>
            <person name="Bowser L."/>
            <person name="Brooks S.Y."/>
            <person name="Carninci P."/>
            <person name="Chao Q."/>
            <person name="Choy N."/>
            <person name="Enju A."/>
            <person name="Goldsmith A.D."/>
            <person name="Gurjal M."/>
            <person name="Hansen N.F."/>
            <person name="Hayashizaki Y."/>
            <person name="Johnson-Hopson C."/>
            <person name="Hsuan V.W."/>
            <person name="Iida K."/>
            <person name="Karnes M."/>
            <person name="Khan S."/>
            <person name="Koesema E."/>
            <person name="Ishida J."/>
            <person name="Jiang P.X."/>
            <person name="Jones T."/>
            <person name="Kawai J."/>
            <person name="Kamiya A."/>
            <person name="Meyers C."/>
            <person name="Nakajima M."/>
            <person name="Narusaka M."/>
            <person name="Seki M."/>
            <person name="Sakurai T."/>
            <person name="Satou M."/>
            <person name="Tamse R."/>
            <person name="Vaysberg M."/>
            <person name="Wallender E.K."/>
            <person name="Wong C."/>
            <person name="Yamamura Y."/>
            <person name="Yuan S."/>
            <person name="Shinozaki K."/>
            <person name="Davis R.W."/>
            <person name="Theologis A."/>
            <person name="Ecker J.R."/>
        </authorList>
    </citation>
    <scope>NUCLEOTIDE SEQUENCE [LARGE SCALE MRNA]</scope>
    <source>
        <strain>cv. Columbia</strain>
    </source>
</reference>
<reference key="4">
    <citation type="submission" date="2006-07" db="EMBL/GenBank/DDBJ databases">
        <title>Large-scale analysis of RIKEN Arabidopsis full-length (RAFL) cDNAs.</title>
        <authorList>
            <person name="Totoki Y."/>
            <person name="Seki M."/>
            <person name="Ishida J."/>
            <person name="Nakajima M."/>
            <person name="Enju A."/>
            <person name="Kamiya A."/>
            <person name="Narusaka M."/>
            <person name="Shin-i T."/>
            <person name="Nakagawa M."/>
            <person name="Sakamoto N."/>
            <person name="Oishi K."/>
            <person name="Kohara Y."/>
            <person name="Kobayashi M."/>
            <person name="Toyoda A."/>
            <person name="Sakaki Y."/>
            <person name="Sakurai T."/>
            <person name="Iida K."/>
            <person name="Akiyama K."/>
            <person name="Satou M."/>
            <person name="Toyoda T."/>
            <person name="Konagaya A."/>
            <person name="Carninci P."/>
            <person name="Kawai J."/>
            <person name="Hayashizaki Y."/>
            <person name="Shinozaki K."/>
        </authorList>
    </citation>
    <scope>NUCLEOTIDE SEQUENCE [LARGE SCALE MRNA]</scope>
    <source>
        <strain>cv. Columbia</strain>
    </source>
</reference>
<reference key="5">
    <citation type="journal article" date="2000" name="Plant Physiol.">
        <title>The cellulose synthase superfamily.</title>
        <authorList>
            <person name="Richmond T.A."/>
            <person name="Somerville C.R."/>
        </authorList>
    </citation>
    <scope>GENE FAMILY</scope>
    <scope>NOMENCLATURE</scope>
</reference>
<protein>
    <recommendedName>
        <fullName evidence="4">Probable glucomannan 4-beta-mannosyltransferase 14</fullName>
        <ecNumber evidence="1">2.4.1.32</ecNumber>
    </recommendedName>
    <alternativeName>
        <fullName evidence="3">Cellulose synthase-like protein A14</fullName>
        <shortName evidence="3">AtCslA14</shortName>
    </alternativeName>
    <alternativeName>
        <fullName evidence="4">Glucomannan synthase</fullName>
    </alternativeName>
    <alternativeName>
        <fullName evidence="4">Mannan synthase 14</fullName>
    </alternativeName>
</protein>
<accession>Q84W06</accession>
<accession>Q9LY45</accession>